<comment type="function">
    <text evidence="1">An essential GTPase which binds GTP, GDP and possibly (p)ppGpp with moderate affinity, with high nucleotide exchange rates and a fairly low GTP hydrolysis rate. Plays a role in control of the cell cycle, stress response, ribosome biogenesis and in those bacteria that undergo differentiation, in morphogenesis control.</text>
</comment>
<comment type="cofactor">
    <cofactor evidence="1">
        <name>Mg(2+)</name>
        <dbReference type="ChEBI" id="CHEBI:18420"/>
    </cofactor>
</comment>
<comment type="subunit">
    <text evidence="1">Monomer.</text>
</comment>
<comment type="subcellular location">
    <subcellularLocation>
        <location evidence="1">Cytoplasm</location>
    </subcellularLocation>
</comment>
<comment type="similarity">
    <text evidence="1">Belongs to the TRAFAC class OBG-HflX-like GTPase superfamily. OBG GTPase family.</text>
</comment>
<reference key="1">
    <citation type="submission" date="2007-11" db="EMBL/GenBank/DDBJ databases">
        <title>The genome sequence of the hyperthermophilic bacterium Thermotoga neapolitana.</title>
        <authorList>
            <person name="Lim S.K."/>
            <person name="Kim J.S."/>
            <person name="Cha S.H."/>
            <person name="Park B.C."/>
            <person name="Lee D.S."/>
            <person name="Tae H.S."/>
            <person name="Kim S.-J."/>
            <person name="Kim J.J."/>
            <person name="Park K.J."/>
            <person name="Lee S.Y."/>
        </authorList>
    </citation>
    <scope>NUCLEOTIDE SEQUENCE [LARGE SCALE GENOMIC DNA]</scope>
    <source>
        <strain>ATCC 49049 / DSM 4359 / NBRC 107923 / NS-E</strain>
    </source>
</reference>
<evidence type="ECO:0000255" key="1">
    <source>
        <dbReference type="HAMAP-Rule" id="MF_01454"/>
    </source>
</evidence>
<evidence type="ECO:0000255" key="2">
    <source>
        <dbReference type="PROSITE-ProRule" id="PRU01229"/>
    </source>
</evidence>
<evidence type="ECO:0000255" key="3">
    <source>
        <dbReference type="PROSITE-ProRule" id="PRU01231"/>
    </source>
</evidence>
<sequence>MNIKSAEFVDRVKIFVKAGDGGNGCVSFRREKYVPKGGPDGGDGGDGGFVFLRANPSLSTLIEFVNKRKFFAENGKHGMGKKMKGRNGRDLYIDVPVGTVVKDASTGQIIADLDEPGKVVCVARGGRGGRGNAHFSTPTRQAPLIAEKGEKGEARWLELELKILADVGLVGYPNVGKSSLIARISNARPKIANYPFTTLVPNLGVVKYGDFSFVVADIPGLIEGASEGVGLGNVFLRHVERCFVIVHMLDVSGFEREDPARDYFIIREEMKKYSPFLLEKPEIVVANKIDLLEREKLPQRIKEIESSIGKEVIPISAVTGEGVDLLLDRVASIVRKERIEREERKEKKDHPMEKPAPVWRKLPERFEVEVVKEEDGQWVVEGEGLRVWMERFDLNQRDARLLILQILEKNGLEEKLKEAGVKEGDVVRIGNFEFEYRE</sequence>
<proteinExistence type="inferred from homology"/>
<name>OBG_THENN</name>
<dbReference type="EC" id="3.6.5.-" evidence="1"/>
<dbReference type="EMBL" id="CP000916">
    <property type="protein sequence ID" value="ACM22769.1"/>
    <property type="molecule type" value="Genomic_DNA"/>
</dbReference>
<dbReference type="RefSeq" id="WP_015919088.1">
    <property type="nucleotide sequence ID" value="NC_011978.1"/>
</dbReference>
<dbReference type="SMR" id="B9K736"/>
<dbReference type="STRING" id="309803.CTN_0593"/>
<dbReference type="KEGG" id="tna:CTN_0593"/>
<dbReference type="eggNOG" id="COG0536">
    <property type="taxonomic scope" value="Bacteria"/>
</dbReference>
<dbReference type="HOGENOM" id="CLU_011747_2_1_0"/>
<dbReference type="Proteomes" id="UP000000445">
    <property type="component" value="Chromosome"/>
</dbReference>
<dbReference type="GO" id="GO:0005737">
    <property type="term" value="C:cytoplasm"/>
    <property type="evidence" value="ECO:0007669"/>
    <property type="project" value="UniProtKB-SubCell"/>
</dbReference>
<dbReference type="GO" id="GO:0005525">
    <property type="term" value="F:GTP binding"/>
    <property type="evidence" value="ECO:0007669"/>
    <property type="project" value="UniProtKB-UniRule"/>
</dbReference>
<dbReference type="GO" id="GO:0003924">
    <property type="term" value="F:GTPase activity"/>
    <property type="evidence" value="ECO:0007669"/>
    <property type="project" value="UniProtKB-UniRule"/>
</dbReference>
<dbReference type="GO" id="GO:0000287">
    <property type="term" value="F:magnesium ion binding"/>
    <property type="evidence" value="ECO:0007669"/>
    <property type="project" value="InterPro"/>
</dbReference>
<dbReference type="GO" id="GO:0042254">
    <property type="term" value="P:ribosome biogenesis"/>
    <property type="evidence" value="ECO:0007669"/>
    <property type="project" value="UniProtKB-UniRule"/>
</dbReference>
<dbReference type="CDD" id="cd01898">
    <property type="entry name" value="Obg"/>
    <property type="match status" value="1"/>
</dbReference>
<dbReference type="FunFam" id="2.70.210.12:FF:000001">
    <property type="entry name" value="GTPase Obg"/>
    <property type="match status" value="1"/>
</dbReference>
<dbReference type="Gene3D" id="3.30.300.350">
    <property type="entry name" value="GTP-binding protein OBG, C-terminal domain"/>
    <property type="match status" value="1"/>
</dbReference>
<dbReference type="Gene3D" id="2.70.210.12">
    <property type="entry name" value="GTP1/OBG domain"/>
    <property type="match status" value="1"/>
</dbReference>
<dbReference type="Gene3D" id="3.40.50.300">
    <property type="entry name" value="P-loop containing nucleotide triphosphate hydrolases"/>
    <property type="match status" value="1"/>
</dbReference>
<dbReference type="HAMAP" id="MF_01454">
    <property type="entry name" value="GTPase_Obg"/>
    <property type="match status" value="1"/>
</dbReference>
<dbReference type="InterPro" id="IPR031167">
    <property type="entry name" value="G_OBG"/>
</dbReference>
<dbReference type="InterPro" id="IPR006073">
    <property type="entry name" value="GTP-bd"/>
</dbReference>
<dbReference type="InterPro" id="IPR014100">
    <property type="entry name" value="GTP-bd_Obg/CgtA"/>
</dbReference>
<dbReference type="InterPro" id="IPR036346">
    <property type="entry name" value="GTP-bd_prot_GTP1/OBG_C_sf"/>
</dbReference>
<dbReference type="InterPro" id="IPR006074">
    <property type="entry name" value="GTP1-OBG_CS"/>
</dbReference>
<dbReference type="InterPro" id="IPR006169">
    <property type="entry name" value="GTP1_OBG_dom"/>
</dbReference>
<dbReference type="InterPro" id="IPR036726">
    <property type="entry name" value="GTP1_OBG_dom_sf"/>
</dbReference>
<dbReference type="InterPro" id="IPR045086">
    <property type="entry name" value="OBG_GTPase"/>
</dbReference>
<dbReference type="InterPro" id="IPR015349">
    <property type="entry name" value="OCT_dom"/>
</dbReference>
<dbReference type="InterPro" id="IPR027417">
    <property type="entry name" value="P-loop_NTPase"/>
</dbReference>
<dbReference type="InterPro" id="IPR005225">
    <property type="entry name" value="Small_GTP-bd"/>
</dbReference>
<dbReference type="NCBIfam" id="TIGR02729">
    <property type="entry name" value="Obg_CgtA"/>
    <property type="match status" value="1"/>
</dbReference>
<dbReference type="NCBIfam" id="TIGR03595">
    <property type="entry name" value="Obg_CgtA_exten"/>
    <property type="match status" value="1"/>
</dbReference>
<dbReference type="NCBIfam" id="NF008954">
    <property type="entry name" value="PRK12296.1"/>
    <property type="match status" value="1"/>
</dbReference>
<dbReference type="NCBIfam" id="NF008955">
    <property type="entry name" value="PRK12297.1"/>
    <property type="match status" value="1"/>
</dbReference>
<dbReference type="NCBIfam" id="NF008956">
    <property type="entry name" value="PRK12299.1"/>
    <property type="match status" value="1"/>
</dbReference>
<dbReference type="NCBIfam" id="TIGR00231">
    <property type="entry name" value="small_GTP"/>
    <property type="match status" value="1"/>
</dbReference>
<dbReference type="PANTHER" id="PTHR11702">
    <property type="entry name" value="DEVELOPMENTALLY REGULATED GTP-BINDING PROTEIN-RELATED"/>
    <property type="match status" value="1"/>
</dbReference>
<dbReference type="PANTHER" id="PTHR11702:SF31">
    <property type="entry name" value="MITOCHONDRIAL RIBOSOME-ASSOCIATED GTPASE 2"/>
    <property type="match status" value="1"/>
</dbReference>
<dbReference type="Pfam" id="PF09269">
    <property type="entry name" value="DUF1967"/>
    <property type="match status" value="1"/>
</dbReference>
<dbReference type="Pfam" id="PF01018">
    <property type="entry name" value="GTP1_OBG"/>
    <property type="match status" value="1"/>
</dbReference>
<dbReference type="Pfam" id="PF01926">
    <property type="entry name" value="MMR_HSR1"/>
    <property type="match status" value="1"/>
</dbReference>
<dbReference type="PIRSF" id="PIRSF002401">
    <property type="entry name" value="GTP_bd_Obg/CgtA"/>
    <property type="match status" value="1"/>
</dbReference>
<dbReference type="PRINTS" id="PR00326">
    <property type="entry name" value="GTP1OBG"/>
</dbReference>
<dbReference type="SUPFAM" id="SSF102741">
    <property type="entry name" value="Obg GTP-binding protein C-terminal domain"/>
    <property type="match status" value="1"/>
</dbReference>
<dbReference type="SUPFAM" id="SSF82051">
    <property type="entry name" value="Obg GTP-binding protein N-terminal domain"/>
    <property type="match status" value="1"/>
</dbReference>
<dbReference type="SUPFAM" id="SSF52540">
    <property type="entry name" value="P-loop containing nucleoside triphosphate hydrolases"/>
    <property type="match status" value="1"/>
</dbReference>
<dbReference type="PROSITE" id="PS51710">
    <property type="entry name" value="G_OBG"/>
    <property type="match status" value="1"/>
</dbReference>
<dbReference type="PROSITE" id="PS00905">
    <property type="entry name" value="GTP1_OBG"/>
    <property type="match status" value="1"/>
</dbReference>
<dbReference type="PROSITE" id="PS51883">
    <property type="entry name" value="OBG"/>
    <property type="match status" value="1"/>
</dbReference>
<dbReference type="PROSITE" id="PS51881">
    <property type="entry name" value="OCT"/>
    <property type="match status" value="1"/>
</dbReference>
<organism>
    <name type="scientific">Thermotoga neapolitana (strain ATCC 49049 / DSM 4359 / NBRC 107923 / NS-E)</name>
    <dbReference type="NCBI Taxonomy" id="309803"/>
    <lineage>
        <taxon>Bacteria</taxon>
        <taxon>Thermotogati</taxon>
        <taxon>Thermotogota</taxon>
        <taxon>Thermotogae</taxon>
        <taxon>Thermotogales</taxon>
        <taxon>Thermotogaceae</taxon>
        <taxon>Thermotoga</taxon>
    </lineage>
</organism>
<gene>
    <name evidence="1" type="primary">obg</name>
    <name type="ordered locus">CTN_0593</name>
</gene>
<feature type="chain" id="PRO_0000386357" description="GTPase Obg">
    <location>
        <begin position="1"/>
        <end position="438"/>
    </location>
</feature>
<feature type="domain" description="Obg" evidence="3">
    <location>
        <begin position="6"/>
        <end position="164"/>
    </location>
</feature>
<feature type="domain" description="OBG-type G" evidence="1">
    <location>
        <begin position="165"/>
        <end position="335"/>
    </location>
</feature>
<feature type="domain" description="OCT" evidence="2">
    <location>
        <begin position="358"/>
        <end position="438"/>
    </location>
</feature>
<feature type="binding site" evidence="1">
    <location>
        <begin position="171"/>
        <end position="178"/>
    </location>
    <ligand>
        <name>GTP</name>
        <dbReference type="ChEBI" id="CHEBI:37565"/>
    </ligand>
</feature>
<feature type="binding site" evidence="1">
    <location>
        <position position="178"/>
    </location>
    <ligand>
        <name>Mg(2+)</name>
        <dbReference type="ChEBI" id="CHEBI:18420"/>
    </ligand>
</feature>
<feature type="binding site" evidence="1">
    <location>
        <begin position="196"/>
        <end position="200"/>
    </location>
    <ligand>
        <name>GTP</name>
        <dbReference type="ChEBI" id="CHEBI:37565"/>
    </ligand>
</feature>
<feature type="binding site" evidence="1">
    <location>
        <position position="198"/>
    </location>
    <ligand>
        <name>Mg(2+)</name>
        <dbReference type="ChEBI" id="CHEBI:18420"/>
    </ligand>
</feature>
<feature type="binding site" evidence="1">
    <location>
        <begin position="217"/>
        <end position="220"/>
    </location>
    <ligand>
        <name>GTP</name>
        <dbReference type="ChEBI" id="CHEBI:37565"/>
    </ligand>
</feature>
<feature type="binding site" evidence="1">
    <location>
        <begin position="287"/>
        <end position="290"/>
    </location>
    <ligand>
        <name>GTP</name>
        <dbReference type="ChEBI" id="CHEBI:37565"/>
    </ligand>
</feature>
<feature type="binding site" evidence="1">
    <location>
        <begin position="316"/>
        <end position="318"/>
    </location>
    <ligand>
        <name>GTP</name>
        <dbReference type="ChEBI" id="CHEBI:37565"/>
    </ligand>
</feature>
<accession>B9K736</accession>
<protein>
    <recommendedName>
        <fullName evidence="1">GTPase Obg</fullName>
        <ecNumber evidence="1">3.6.5.-</ecNumber>
    </recommendedName>
    <alternativeName>
        <fullName evidence="1">GTP-binding protein Obg</fullName>
    </alternativeName>
</protein>
<keyword id="KW-0963">Cytoplasm</keyword>
<keyword id="KW-0342">GTP-binding</keyword>
<keyword id="KW-0378">Hydrolase</keyword>
<keyword id="KW-0460">Magnesium</keyword>
<keyword id="KW-0479">Metal-binding</keyword>
<keyword id="KW-0547">Nucleotide-binding</keyword>